<comment type="function">
    <text evidence="1">Part of the twin-arginine translocation (Tat) system that transports large folded proteins containing a characteristic twin-arginine motif in their signal peptide across membranes. Together with TatB, TatC is part of a receptor directly interacting with Tat signal peptides.</text>
</comment>
<comment type="subunit">
    <text evidence="1">The Tat system comprises two distinct complexes: a TatABC complex, containing multiple copies of TatA, TatB and TatC subunits, and a separate TatA complex, containing only TatA subunits. Substrates initially bind to the TatABC complex, which probably triggers association of the separate TatA complex to form the active translocon.</text>
</comment>
<comment type="subcellular location">
    <subcellularLocation>
        <location evidence="1">Cell inner membrane</location>
        <topology evidence="1">Multi-pass membrane protein</topology>
    </subcellularLocation>
</comment>
<comment type="similarity">
    <text evidence="1">Belongs to the TatC family.</text>
</comment>
<organism>
    <name type="scientific">Halothiobacillus neapolitanus (strain ATCC 23641 / c2)</name>
    <name type="common">Thiobacillus neapolitanus</name>
    <dbReference type="NCBI Taxonomy" id="555778"/>
    <lineage>
        <taxon>Bacteria</taxon>
        <taxon>Pseudomonadati</taxon>
        <taxon>Pseudomonadota</taxon>
        <taxon>Gammaproteobacteria</taxon>
        <taxon>Chromatiales</taxon>
        <taxon>Halothiobacillaceae</taxon>
        <taxon>Halothiobacillus</taxon>
    </lineage>
</organism>
<gene>
    <name evidence="1" type="primary">tatC</name>
    <name type="ordered locus">Hneap_0119</name>
</gene>
<evidence type="ECO:0000255" key="1">
    <source>
        <dbReference type="HAMAP-Rule" id="MF_00902"/>
    </source>
</evidence>
<evidence type="ECO:0000256" key="2">
    <source>
        <dbReference type="SAM" id="MobiDB-lite"/>
    </source>
</evidence>
<reference key="1">
    <citation type="submission" date="2009-10" db="EMBL/GenBank/DDBJ databases">
        <title>Complete sequence of Halothiobacillus neapolitanus c2.</title>
        <authorList>
            <consortium name="US DOE Joint Genome Institute"/>
            <person name="Lucas S."/>
            <person name="Copeland A."/>
            <person name="Lapidus A."/>
            <person name="Glavina del Rio T."/>
            <person name="Tice H."/>
            <person name="Bruce D."/>
            <person name="Goodwin L."/>
            <person name="Pitluck S."/>
            <person name="Davenport K."/>
            <person name="Brettin T."/>
            <person name="Detter J.C."/>
            <person name="Han C."/>
            <person name="Tapia R."/>
            <person name="Larimer F."/>
            <person name="Land M."/>
            <person name="Hauser L."/>
            <person name="Kyrpides N."/>
            <person name="Mikhailova N."/>
            <person name="Kerfeld C."/>
            <person name="Cannon G."/>
            <person name="Heinhort S."/>
        </authorList>
    </citation>
    <scope>NUCLEOTIDE SEQUENCE [LARGE SCALE GENOMIC DNA]</scope>
    <source>
        <strain>ATCC 23641 / c2</strain>
    </source>
</reference>
<keyword id="KW-0997">Cell inner membrane</keyword>
<keyword id="KW-1003">Cell membrane</keyword>
<keyword id="KW-0472">Membrane</keyword>
<keyword id="KW-0653">Protein transport</keyword>
<keyword id="KW-1185">Reference proteome</keyword>
<keyword id="KW-0811">Translocation</keyword>
<keyword id="KW-0812">Transmembrane</keyword>
<keyword id="KW-1133">Transmembrane helix</keyword>
<keyword id="KW-0813">Transport</keyword>
<accession>D0KWI6</accession>
<feature type="chain" id="PRO_0000412866" description="Sec-independent protein translocase protein TatC">
    <location>
        <begin position="1"/>
        <end position="366"/>
    </location>
</feature>
<feature type="transmembrane region" description="Helical" evidence="1">
    <location>
        <begin position="42"/>
        <end position="62"/>
    </location>
</feature>
<feature type="transmembrane region" description="Helical" evidence="1">
    <location>
        <begin position="70"/>
        <end position="90"/>
    </location>
</feature>
<feature type="transmembrane region" description="Helical" evidence="1">
    <location>
        <begin position="97"/>
        <end position="117"/>
    </location>
</feature>
<feature type="transmembrane region" description="Helical" evidence="1">
    <location>
        <begin position="134"/>
        <end position="154"/>
    </location>
</feature>
<feature type="transmembrane region" description="Helical" evidence="1">
    <location>
        <begin position="179"/>
        <end position="199"/>
    </location>
</feature>
<feature type="transmembrane region" description="Helical" evidence="1">
    <location>
        <begin position="207"/>
        <end position="227"/>
    </location>
</feature>
<feature type="transmembrane region" description="Helical" evidence="1">
    <location>
        <begin position="230"/>
        <end position="250"/>
    </location>
</feature>
<feature type="region of interest" description="Disordered" evidence="2">
    <location>
        <begin position="266"/>
        <end position="366"/>
    </location>
</feature>
<feature type="compositionally biased region" description="Acidic residues" evidence="2">
    <location>
        <begin position="266"/>
        <end position="279"/>
    </location>
</feature>
<feature type="compositionally biased region" description="Basic and acidic residues" evidence="2">
    <location>
        <begin position="281"/>
        <end position="290"/>
    </location>
</feature>
<feature type="compositionally biased region" description="Basic and acidic residues" evidence="2">
    <location>
        <begin position="301"/>
        <end position="318"/>
    </location>
</feature>
<feature type="compositionally biased region" description="Polar residues" evidence="2">
    <location>
        <begin position="319"/>
        <end position="333"/>
    </location>
</feature>
<protein>
    <recommendedName>
        <fullName evidence="1">Sec-independent protein translocase protein TatC</fullName>
    </recommendedName>
</protein>
<name>TATC_HALNC</name>
<dbReference type="EMBL" id="CP001801">
    <property type="protein sequence ID" value="ACX94983.1"/>
    <property type="molecule type" value="Genomic_DNA"/>
</dbReference>
<dbReference type="RefSeq" id="WP_012823019.1">
    <property type="nucleotide sequence ID" value="NC_013422.1"/>
</dbReference>
<dbReference type="SMR" id="D0KWI6"/>
<dbReference type="STRING" id="555778.Hneap_0119"/>
<dbReference type="KEGG" id="hna:Hneap_0119"/>
<dbReference type="eggNOG" id="COG0805">
    <property type="taxonomic scope" value="Bacteria"/>
</dbReference>
<dbReference type="HOGENOM" id="CLU_031942_1_1_6"/>
<dbReference type="Proteomes" id="UP000009102">
    <property type="component" value="Chromosome"/>
</dbReference>
<dbReference type="GO" id="GO:0033281">
    <property type="term" value="C:TAT protein transport complex"/>
    <property type="evidence" value="ECO:0007669"/>
    <property type="project" value="UniProtKB-UniRule"/>
</dbReference>
<dbReference type="GO" id="GO:0009977">
    <property type="term" value="F:proton motive force dependent protein transmembrane transporter activity"/>
    <property type="evidence" value="ECO:0007669"/>
    <property type="project" value="TreeGrafter"/>
</dbReference>
<dbReference type="GO" id="GO:0065002">
    <property type="term" value="P:intracellular protein transmembrane transport"/>
    <property type="evidence" value="ECO:0007669"/>
    <property type="project" value="TreeGrafter"/>
</dbReference>
<dbReference type="GO" id="GO:0043953">
    <property type="term" value="P:protein transport by the Tat complex"/>
    <property type="evidence" value="ECO:0007669"/>
    <property type="project" value="UniProtKB-UniRule"/>
</dbReference>
<dbReference type="HAMAP" id="MF_00902">
    <property type="entry name" value="TatC"/>
    <property type="match status" value="1"/>
</dbReference>
<dbReference type="InterPro" id="IPR019820">
    <property type="entry name" value="Sec-indep_translocase_CS"/>
</dbReference>
<dbReference type="InterPro" id="IPR002033">
    <property type="entry name" value="TatC"/>
</dbReference>
<dbReference type="NCBIfam" id="TIGR00945">
    <property type="entry name" value="tatC"/>
    <property type="match status" value="1"/>
</dbReference>
<dbReference type="PANTHER" id="PTHR30371">
    <property type="entry name" value="SEC-INDEPENDENT PROTEIN TRANSLOCASE PROTEIN TATC"/>
    <property type="match status" value="1"/>
</dbReference>
<dbReference type="PANTHER" id="PTHR30371:SF0">
    <property type="entry name" value="SEC-INDEPENDENT PROTEIN TRANSLOCASE PROTEIN TATC, CHLOROPLASTIC-RELATED"/>
    <property type="match status" value="1"/>
</dbReference>
<dbReference type="Pfam" id="PF00902">
    <property type="entry name" value="TatC"/>
    <property type="match status" value="1"/>
</dbReference>
<dbReference type="PRINTS" id="PR01840">
    <property type="entry name" value="TATCFAMILY"/>
</dbReference>
<dbReference type="PROSITE" id="PS01218">
    <property type="entry name" value="TATC"/>
    <property type="match status" value="1"/>
</dbReference>
<sequence length="366" mass="39946">MTERDSSPEADKNGLADVVEETGMAGFLGHLVELRNRLLKGVLAVLVLFLILFPFRNELFTMLADPLSRHMPAGSTMIAVEVASPFFIPLKLTALTAVFIAIPFLLYQLWAFIAPGLYKHERKLVAPLVFSSTILFYLGAAFAYFVVFPVVFGFLSTAGPSDVNFAPDIGEYLSFVTSLFFAFGFVFEVPVAIVLLVIVGVVTPDKLAGFRRYAILIAFIIAAILTPPDVLSQFMMALPIIMLYEFGLFVSRFFYKAKLARAAEVEAEESGAADDESDEAVSARHAEYEAKAQTQADEPLDMDKAFDEAEADQRRLESDSSASDDGPESNTAGRTEEGEQPSTGSKPEDEPNAPSEPSPKKPDSPV</sequence>
<proteinExistence type="inferred from homology"/>